<gene>
    <name evidence="1" type="primary">rpmG1</name>
    <name type="ordered locus">Mfl089</name>
</gene>
<organism>
    <name type="scientific">Mesoplasma florum (strain ATCC 33453 / NBRC 100688 / NCTC 11704 / L1)</name>
    <name type="common">Acholeplasma florum</name>
    <dbReference type="NCBI Taxonomy" id="265311"/>
    <lineage>
        <taxon>Bacteria</taxon>
        <taxon>Bacillati</taxon>
        <taxon>Mycoplasmatota</taxon>
        <taxon>Mollicutes</taxon>
        <taxon>Entomoplasmatales</taxon>
        <taxon>Entomoplasmataceae</taxon>
        <taxon>Mesoplasma</taxon>
    </lineage>
</organism>
<reference key="1">
    <citation type="submission" date="2004-06" db="EMBL/GenBank/DDBJ databases">
        <authorList>
            <person name="Birren B.W."/>
            <person name="Stange-Thomann N."/>
            <person name="Hafez N."/>
            <person name="DeCaprio D."/>
            <person name="Fisher S."/>
            <person name="Butler J."/>
            <person name="Elkins T."/>
            <person name="Kodira C.D."/>
            <person name="Major J."/>
            <person name="Wang S."/>
            <person name="Nicol R."/>
            <person name="Nusbaum C."/>
        </authorList>
    </citation>
    <scope>NUCLEOTIDE SEQUENCE [LARGE SCALE GENOMIC DNA]</scope>
    <source>
        <strain>ATCC 33453 / NBRC 100688 / NCTC 11704 / L1</strain>
    </source>
</reference>
<keyword id="KW-1185">Reference proteome</keyword>
<keyword id="KW-0687">Ribonucleoprotein</keyword>
<keyword id="KW-0689">Ribosomal protein</keyword>
<name>RL331_MESFL</name>
<accession>Q6F228</accession>
<comment type="similarity">
    <text evidence="1">Belongs to the bacterial ribosomal protein bL33 family.</text>
</comment>
<protein>
    <recommendedName>
        <fullName evidence="1">Large ribosomal subunit protein bL33A</fullName>
    </recommendedName>
    <alternativeName>
        <fullName evidence="1">50S ribosomal protein L33 1</fullName>
    </alternativeName>
</protein>
<proteinExistence type="inferred from homology"/>
<sequence length="54" mass="6468">MHKTKSTRKIILVCEDCLSRNYSLNKSNLTQKERLEIKKFCSMCNKHTLHKETR</sequence>
<dbReference type="EMBL" id="AE017263">
    <property type="protein sequence ID" value="AAT75445.1"/>
    <property type="molecule type" value="Genomic_DNA"/>
</dbReference>
<dbReference type="RefSeq" id="WP_011182986.1">
    <property type="nucleotide sequence ID" value="NC_006055.1"/>
</dbReference>
<dbReference type="RefSeq" id="YP_053329.1">
    <property type="nucleotide sequence ID" value="NC_006055.1"/>
</dbReference>
<dbReference type="SMR" id="Q6F228"/>
<dbReference type="STRING" id="265311.Mfl089"/>
<dbReference type="PaxDb" id="265311-Mfl089"/>
<dbReference type="EnsemblBacteria" id="AAT75445">
    <property type="protein sequence ID" value="AAT75445"/>
    <property type="gene ID" value="Mfl089"/>
</dbReference>
<dbReference type="GeneID" id="2897607"/>
<dbReference type="KEGG" id="mfl:Mfl089"/>
<dbReference type="PATRIC" id="fig|265311.5.peg.90"/>
<dbReference type="eggNOG" id="COG0267">
    <property type="taxonomic scope" value="Bacteria"/>
</dbReference>
<dbReference type="HOGENOM" id="CLU_190949_0_1_14"/>
<dbReference type="OrthoDB" id="197660at2"/>
<dbReference type="Proteomes" id="UP000006647">
    <property type="component" value="Chromosome"/>
</dbReference>
<dbReference type="GO" id="GO:0005737">
    <property type="term" value="C:cytoplasm"/>
    <property type="evidence" value="ECO:0007669"/>
    <property type="project" value="UniProtKB-ARBA"/>
</dbReference>
<dbReference type="GO" id="GO:1990904">
    <property type="term" value="C:ribonucleoprotein complex"/>
    <property type="evidence" value="ECO:0007669"/>
    <property type="project" value="UniProtKB-KW"/>
</dbReference>
<dbReference type="GO" id="GO:0005840">
    <property type="term" value="C:ribosome"/>
    <property type="evidence" value="ECO:0007669"/>
    <property type="project" value="UniProtKB-KW"/>
</dbReference>
<dbReference type="GO" id="GO:0003735">
    <property type="term" value="F:structural constituent of ribosome"/>
    <property type="evidence" value="ECO:0007669"/>
    <property type="project" value="InterPro"/>
</dbReference>
<dbReference type="GO" id="GO:0006412">
    <property type="term" value="P:translation"/>
    <property type="evidence" value="ECO:0007669"/>
    <property type="project" value="UniProtKB-UniRule"/>
</dbReference>
<dbReference type="Gene3D" id="2.20.28.120">
    <property type="entry name" value="Ribosomal protein L33"/>
    <property type="match status" value="1"/>
</dbReference>
<dbReference type="HAMAP" id="MF_00294">
    <property type="entry name" value="Ribosomal_bL33"/>
    <property type="match status" value="1"/>
</dbReference>
<dbReference type="InterPro" id="IPR001705">
    <property type="entry name" value="Ribosomal_bL33"/>
</dbReference>
<dbReference type="InterPro" id="IPR038584">
    <property type="entry name" value="Ribosomal_bL33_sf"/>
</dbReference>
<dbReference type="InterPro" id="IPR011332">
    <property type="entry name" value="Ribosomal_zn-bd"/>
</dbReference>
<dbReference type="NCBIfam" id="NF001764">
    <property type="entry name" value="PRK00504.1"/>
    <property type="match status" value="1"/>
</dbReference>
<dbReference type="NCBIfam" id="NF001860">
    <property type="entry name" value="PRK00595.1"/>
    <property type="match status" value="1"/>
</dbReference>
<dbReference type="NCBIfam" id="TIGR01023">
    <property type="entry name" value="rpmG_bact"/>
    <property type="match status" value="1"/>
</dbReference>
<dbReference type="Pfam" id="PF00471">
    <property type="entry name" value="Ribosomal_L33"/>
    <property type="match status" value="1"/>
</dbReference>
<dbReference type="SUPFAM" id="SSF57829">
    <property type="entry name" value="Zn-binding ribosomal proteins"/>
    <property type="match status" value="1"/>
</dbReference>
<feature type="chain" id="PRO_0000356537" description="Large ribosomal subunit protein bL33A">
    <location>
        <begin position="1"/>
        <end position="54"/>
    </location>
</feature>
<evidence type="ECO:0000255" key="1">
    <source>
        <dbReference type="HAMAP-Rule" id="MF_00294"/>
    </source>
</evidence>